<dbReference type="EC" id="2.3.1.-"/>
<dbReference type="EMBL" id="AL009126">
    <property type="protein sequence ID" value="CAB14073.1"/>
    <property type="molecule type" value="Genomic_DNA"/>
</dbReference>
<dbReference type="RefSeq" id="NP_390038.1">
    <property type="nucleotide sequence ID" value="NC_000964.3"/>
</dbReference>
<dbReference type="RefSeq" id="WP_004399156.1">
    <property type="nucleotide sequence ID" value="NZ_OZ025638.1"/>
</dbReference>
<dbReference type="SMR" id="O31995"/>
<dbReference type="FunCoup" id="O31995">
    <property type="interactions" value="21"/>
</dbReference>
<dbReference type="STRING" id="224308.BSU21550"/>
<dbReference type="PaxDb" id="224308-BSU21550"/>
<dbReference type="EnsemblBacteria" id="CAB14073">
    <property type="protein sequence ID" value="CAB14073"/>
    <property type="gene ID" value="BSU_21550"/>
</dbReference>
<dbReference type="GeneID" id="939118"/>
<dbReference type="KEGG" id="bsu:BSU21550"/>
<dbReference type="PATRIC" id="fig|224308.179.peg.2353"/>
<dbReference type="eggNOG" id="COG1670">
    <property type="taxonomic scope" value="Bacteria"/>
</dbReference>
<dbReference type="InParanoid" id="O31995"/>
<dbReference type="OrthoDB" id="9795206at2"/>
<dbReference type="PhylomeDB" id="O31995"/>
<dbReference type="BioCyc" id="BSUB:BSU21550-MONOMER"/>
<dbReference type="Proteomes" id="UP000001570">
    <property type="component" value="Chromosome"/>
</dbReference>
<dbReference type="GO" id="GO:0016747">
    <property type="term" value="F:acyltransferase activity, transferring groups other than amino-acyl groups"/>
    <property type="evidence" value="ECO:0007669"/>
    <property type="project" value="InterPro"/>
</dbReference>
<dbReference type="CDD" id="cd04301">
    <property type="entry name" value="NAT_SF"/>
    <property type="match status" value="1"/>
</dbReference>
<dbReference type="Gene3D" id="3.40.630.30">
    <property type="match status" value="1"/>
</dbReference>
<dbReference type="InterPro" id="IPR016181">
    <property type="entry name" value="Acyl_CoA_acyltransferase"/>
</dbReference>
<dbReference type="InterPro" id="IPR000182">
    <property type="entry name" value="GNAT_dom"/>
</dbReference>
<dbReference type="PANTHER" id="PTHR43415:SF5">
    <property type="entry name" value="ACETYLTRANSFERASE"/>
    <property type="match status" value="1"/>
</dbReference>
<dbReference type="PANTHER" id="PTHR43415">
    <property type="entry name" value="SPERMIDINE N(1)-ACETYLTRANSFERASE"/>
    <property type="match status" value="1"/>
</dbReference>
<dbReference type="Pfam" id="PF13302">
    <property type="entry name" value="Acetyltransf_3"/>
    <property type="match status" value="1"/>
</dbReference>
<dbReference type="SUPFAM" id="SSF55729">
    <property type="entry name" value="Acyl-CoA N-acyltransferases (Nat)"/>
    <property type="match status" value="1"/>
</dbReference>
<dbReference type="PROSITE" id="PS51186">
    <property type="entry name" value="GNAT"/>
    <property type="match status" value="1"/>
</dbReference>
<reference key="1">
    <citation type="journal article" date="1997" name="Nature">
        <title>The complete genome sequence of the Gram-positive bacterium Bacillus subtilis.</title>
        <authorList>
            <person name="Kunst F."/>
            <person name="Ogasawara N."/>
            <person name="Moszer I."/>
            <person name="Albertini A.M."/>
            <person name="Alloni G."/>
            <person name="Azevedo V."/>
            <person name="Bertero M.G."/>
            <person name="Bessieres P."/>
            <person name="Bolotin A."/>
            <person name="Borchert S."/>
            <person name="Borriss R."/>
            <person name="Boursier L."/>
            <person name="Brans A."/>
            <person name="Braun M."/>
            <person name="Brignell S.C."/>
            <person name="Bron S."/>
            <person name="Brouillet S."/>
            <person name="Bruschi C.V."/>
            <person name="Caldwell B."/>
            <person name="Capuano V."/>
            <person name="Carter N.M."/>
            <person name="Choi S.-K."/>
            <person name="Codani J.-J."/>
            <person name="Connerton I.F."/>
            <person name="Cummings N.J."/>
            <person name="Daniel R.A."/>
            <person name="Denizot F."/>
            <person name="Devine K.M."/>
            <person name="Duesterhoeft A."/>
            <person name="Ehrlich S.D."/>
            <person name="Emmerson P.T."/>
            <person name="Entian K.-D."/>
            <person name="Errington J."/>
            <person name="Fabret C."/>
            <person name="Ferrari E."/>
            <person name="Foulger D."/>
            <person name="Fritz C."/>
            <person name="Fujita M."/>
            <person name="Fujita Y."/>
            <person name="Fuma S."/>
            <person name="Galizzi A."/>
            <person name="Galleron N."/>
            <person name="Ghim S.-Y."/>
            <person name="Glaser P."/>
            <person name="Goffeau A."/>
            <person name="Golightly E.J."/>
            <person name="Grandi G."/>
            <person name="Guiseppi G."/>
            <person name="Guy B.J."/>
            <person name="Haga K."/>
            <person name="Haiech J."/>
            <person name="Harwood C.R."/>
            <person name="Henaut A."/>
            <person name="Hilbert H."/>
            <person name="Holsappel S."/>
            <person name="Hosono S."/>
            <person name="Hullo M.-F."/>
            <person name="Itaya M."/>
            <person name="Jones L.-M."/>
            <person name="Joris B."/>
            <person name="Karamata D."/>
            <person name="Kasahara Y."/>
            <person name="Klaerr-Blanchard M."/>
            <person name="Klein C."/>
            <person name="Kobayashi Y."/>
            <person name="Koetter P."/>
            <person name="Koningstein G."/>
            <person name="Krogh S."/>
            <person name="Kumano M."/>
            <person name="Kurita K."/>
            <person name="Lapidus A."/>
            <person name="Lardinois S."/>
            <person name="Lauber J."/>
            <person name="Lazarevic V."/>
            <person name="Lee S.-M."/>
            <person name="Levine A."/>
            <person name="Liu H."/>
            <person name="Masuda S."/>
            <person name="Mauel C."/>
            <person name="Medigue C."/>
            <person name="Medina N."/>
            <person name="Mellado R.P."/>
            <person name="Mizuno M."/>
            <person name="Moestl D."/>
            <person name="Nakai S."/>
            <person name="Noback M."/>
            <person name="Noone D."/>
            <person name="O'Reilly M."/>
            <person name="Ogawa K."/>
            <person name="Ogiwara A."/>
            <person name="Oudega B."/>
            <person name="Park S.-H."/>
            <person name="Parro V."/>
            <person name="Pohl T.M."/>
            <person name="Portetelle D."/>
            <person name="Porwollik S."/>
            <person name="Prescott A.M."/>
            <person name="Presecan E."/>
            <person name="Pujic P."/>
            <person name="Purnelle B."/>
            <person name="Rapoport G."/>
            <person name="Rey M."/>
            <person name="Reynolds S."/>
            <person name="Rieger M."/>
            <person name="Rivolta C."/>
            <person name="Rocha E."/>
            <person name="Roche B."/>
            <person name="Rose M."/>
            <person name="Sadaie Y."/>
            <person name="Sato T."/>
            <person name="Scanlan E."/>
            <person name="Schleich S."/>
            <person name="Schroeter R."/>
            <person name="Scoffone F."/>
            <person name="Sekiguchi J."/>
            <person name="Sekowska A."/>
            <person name="Seror S.J."/>
            <person name="Serror P."/>
            <person name="Shin B.-S."/>
            <person name="Soldo B."/>
            <person name="Sorokin A."/>
            <person name="Tacconi E."/>
            <person name="Takagi T."/>
            <person name="Takahashi H."/>
            <person name="Takemaru K."/>
            <person name="Takeuchi M."/>
            <person name="Tamakoshi A."/>
            <person name="Tanaka T."/>
            <person name="Terpstra P."/>
            <person name="Tognoni A."/>
            <person name="Tosato V."/>
            <person name="Uchiyama S."/>
            <person name="Vandenbol M."/>
            <person name="Vannier F."/>
            <person name="Vassarotti A."/>
            <person name="Viari A."/>
            <person name="Wambutt R."/>
            <person name="Wedler E."/>
            <person name="Wedler H."/>
            <person name="Weitzenegger T."/>
            <person name="Winters P."/>
            <person name="Wipat A."/>
            <person name="Yamamoto H."/>
            <person name="Yamane K."/>
            <person name="Yasumoto K."/>
            <person name="Yata K."/>
            <person name="Yoshida K."/>
            <person name="Yoshikawa H.-F."/>
            <person name="Zumstein E."/>
            <person name="Yoshikawa H."/>
            <person name="Danchin A."/>
        </authorList>
    </citation>
    <scope>NUCLEOTIDE SEQUENCE [LARGE SCALE GENOMIC DNA]</scope>
    <source>
        <strain>168</strain>
    </source>
</reference>
<gene>
    <name type="primary">yokL</name>
    <name type="ordered locus">BSU21550</name>
</gene>
<comment type="similarity">
    <text evidence="2">Belongs to the acetyltransferase family.</text>
</comment>
<organism>
    <name type="scientific">Bacillus subtilis (strain 168)</name>
    <dbReference type="NCBI Taxonomy" id="224308"/>
    <lineage>
        <taxon>Bacteria</taxon>
        <taxon>Bacillati</taxon>
        <taxon>Bacillota</taxon>
        <taxon>Bacilli</taxon>
        <taxon>Bacillales</taxon>
        <taxon>Bacillaceae</taxon>
        <taxon>Bacillus</taxon>
    </lineage>
</organism>
<accession>O31995</accession>
<name>YOKL_BACSU</name>
<evidence type="ECO:0000255" key="1">
    <source>
        <dbReference type="PROSITE-ProRule" id="PRU00532"/>
    </source>
</evidence>
<evidence type="ECO:0000305" key="2"/>
<feature type="chain" id="PRO_0000360178" description="SPbeta prophage-derived uncharacterized N-acetyltransferase YokL">
    <location>
        <begin position="1"/>
        <end position="177"/>
    </location>
</feature>
<feature type="domain" description="N-acetyltransferase" evidence="1">
    <location>
        <begin position="11"/>
        <end position="170"/>
    </location>
</feature>
<proteinExistence type="inferred from homology"/>
<keyword id="KW-0012">Acyltransferase</keyword>
<keyword id="KW-1185">Reference proteome</keyword>
<keyword id="KW-0808">Transferase</keyword>
<sequence>MAVTYWTGENLTLRAIQPEDIVIFDSLDDEILRNMDSLHFPRSANNMREWVEEQLEKDEFRFIAVESDNNIVGMIETFDCDRKNGTFGYYLAVFEPYRGKGFAKEMILMVLRFFFLELAYQKVNTTVYSFNNPSIRLHEKLGFMKEGQLRKIIFTKGAYYDGICFGMTREEFELNHG</sequence>
<protein>
    <recommendedName>
        <fullName>SPbeta prophage-derived uncharacterized N-acetyltransferase YokL</fullName>
        <ecNumber>2.3.1.-</ecNumber>
    </recommendedName>
</protein>